<reference key="1">
    <citation type="journal article" date="2010" name="PLoS ONE">
        <title>The complete genome sequence of Cupriavidus metallidurans strain CH34, a master survivalist in harsh and anthropogenic environments.</title>
        <authorList>
            <person name="Janssen P.J."/>
            <person name="Van Houdt R."/>
            <person name="Moors H."/>
            <person name="Monsieurs P."/>
            <person name="Morin N."/>
            <person name="Michaux A."/>
            <person name="Benotmane M.A."/>
            <person name="Leys N."/>
            <person name="Vallaeys T."/>
            <person name="Lapidus A."/>
            <person name="Monchy S."/>
            <person name="Medigue C."/>
            <person name="Taghavi S."/>
            <person name="McCorkle S."/>
            <person name="Dunn J."/>
            <person name="van der Lelie D."/>
            <person name="Mergeay M."/>
        </authorList>
    </citation>
    <scope>NUCLEOTIDE SEQUENCE [LARGE SCALE GENOMIC DNA]</scope>
    <source>
        <strain>ATCC 43123 / DSM 2839 / NBRC 102507 / CH34</strain>
    </source>
</reference>
<feature type="chain" id="PRO_1000014268" description="Small ribosomal subunit protein uS7">
    <location>
        <begin position="1"/>
        <end position="156"/>
    </location>
</feature>
<gene>
    <name evidence="1" type="primary">rpsG</name>
    <name type="ordered locus">Rmet_3326</name>
</gene>
<proteinExistence type="inferred from homology"/>
<organism>
    <name type="scientific">Cupriavidus metallidurans (strain ATCC 43123 / DSM 2839 / NBRC 102507 / CH34)</name>
    <name type="common">Ralstonia metallidurans</name>
    <dbReference type="NCBI Taxonomy" id="266264"/>
    <lineage>
        <taxon>Bacteria</taxon>
        <taxon>Pseudomonadati</taxon>
        <taxon>Pseudomonadota</taxon>
        <taxon>Betaproteobacteria</taxon>
        <taxon>Burkholderiales</taxon>
        <taxon>Burkholderiaceae</taxon>
        <taxon>Cupriavidus</taxon>
    </lineage>
</organism>
<protein>
    <recommendedName>
        <fullName evidence="1">Small ribosomal subunit protein uS7</fullName>
    </recommendedName>
    <alternativeName>
        <fullName evidence="2">30S ribosomal protein S7</fullName>
    </alternativeName>
</protein>
<evidence type="ECO:0000255" key="1">
    <source>
        <dbReference type="HAMAP-Rule" id="MF_00480"/>
    </source>
</evidence>
<evidence type="ECO:0000305" key="2"/>
<sequence>MPRRREVPKRDILPDPKFGNVEVAKFMNVLMLDGKKSVAERIVYGAFDQIEKKAGKAPIEVFSVAINNVKPVVEVKSRRVGGANYQVPVEVRPSRRLALAMRWLREAAKKRSEKSMALRLAGELLEAAEGRGGAMKKRDEVHRMAEANKAFSHFRF</sequence>
<keyword id="KW-1185">Reference proteome</keyword>
<keyword id="KW-0687">Ribonucleoprotein</keyword>
<keyword id="KW-0689">Ribosomal protein</keyword>
<keyword id="KW-0694">RNA-binding</keyword>
<keyword id="KW-0699">rRNA-binding</keyword>
<keyword id="KW-0820">tRNA-binding</keyword>
<accession>Q1LI28</accession>
<dbReference type="EMBL" id="CP000352">
    <property type="protein sequence ID" value="ABF10198.1"/>
    <property type="molecule type" value="Genomic_DNA"/>
</dbReference>
<dbReference type="RefSeq" id="WP_011517776.1">
    <property type="nucleotide sequence ID" value="NC_007973.1"/>
</dbReference>
<dbReference type="SMR" id="Q1LI28"/>
<dbReference type="STRING" id="266264.Rmet_3326"/>
<dbReference type="KEGG" id="rme:Rmet_3326"/>
<dbReference type="eggNOG" id="COG0049">
    <property type="taxonomic scope" value="Bacteria"/>
</dbReference>
<dbReference type="HOGENOM" id="CLU_072226_1_1_4"/>
<dbReference type="Proteomes" id="UP000002429">
    <property type="component" value="Chromosome"/>
</dbReference>
<dbReference type="GO" id="GO:0015935">
    <property type="term" value="C:small ribosomal subunit"/>
    <property type="evidence" value="ECO:0007669"/>
    <property type="project" value="InterPro"/>
</dbReference>
<dbReference type="GO" id="GO:0019843">
    <property type="term" value="F:rRNA binding"/>
    <property type="evidence" value="ECO:0007669"/>
    <property type="project" value="UniProtKB-UniRule"/>
</dbReference>
<dbReference type="GO" id="GO:0003735">
    <property type="term" value="F:structural constituent of ribosome"/>
    <property type="evidence" value="ECO:0007669"/>
    <property type="project" value="InterPro"/>
</dbReference>
<dbReference type="GO" id="GO:0000049">
    <property type="term" value="F:tRNA binding"/>
    <property type="evidence" value="ECO:0007669"/>
    <property type="project" value="UniProtKB-UniRule"/>
</dbReference>
<dbReference type="GO" id="GO:0006412">
    <property type="term" value="P:translation"/>
    <property type="evidence" value="ECO:0007669"/>
    <property type="project" value="UniProtKB-UniRule"/>
</dbReference>
<dbReference type="CDD" id="cd14869">
    <property type="entry name" value="uS7_Bacteria"/>
    <property type="match status" value="1"/>
</dbReference>
<dbReference type="FunFam" id="1.10.455.10:FF:000001">
    <property type="entry name" value="30S ribosomal protein S7"/>
    <property type="match status" value="1"/>
</dbReference>
<dbReference type="Gene3D" id="1.10.455.10">
    <property type="entry name" value="Ribosomal protein S7 domain"/>
    <property type="match status" value="1"/>
</dbReference>
<dbReference type="HAMAP" id="MF_00480_B">
    <property type="entry name" value="Ribosomal_uS7_B"/>
    <property type="match status" value="1"/>
</dbReference>
<dbReference type="InterPro" id="IPR000235">
    <property type="entry name" value="Ribosomal_uS7"/>
</dbReference>
<dbReference type="InterPro" id="IPR005717">
    <property type="entry name" value="Ribosomal_uS7_bac/org-type"/>
</dbReference>
<dbReference type="InterPro" id="IPR020606">
    <property type="entry name" value="Ribosomal_uS7_CS"/>
</dbReference>
<dbReference type="InterPro" id="IPR023798">
    <property type="entry name" value="Ribosomal_uS7_dom"/>
</dbReference>
<dbReference type="InterPro" id="IPR036823">
    <property type="entry name" value="Ribosomal_uS7_dom_sf"/>
</dbReference>
<dbReference type="NCBIfam" id="TIGR01029">
    <property type="entry name" value="rpsG_bact"/>
    <property type="match status" value="1"/>
</dbReference>
<dbReference type="PANTHER" id="PTHR11205">
    <property type="entry name" value="RIBOSOMAL PROTEIN S7"/>
    <property type="match status" value="1"/>
</dbReference>
<dbReference type="Pfam" id="PF00177">
    <property type="entry name" value="Ribosomal_S7"/>
    <property type="match status" value="1"/>
</dbReference>
<dbReference type="PIRSF" id="PIRSF002122">
    <property type="entry name" value="RPS7p_RPS7a_RPS5e_RPS7o"/>
    <property type="match status" value="1"/>
</dbReference>
<dbReference type="SUPFAM" id="SSF47973">
    <property type="entry name" value="Ribosomal protein S7"/>
    <property type="match status" value="1"/>
</dbReference>
<dbReference type="PROSITE" id="PS00052">
    <property type="entry name" value="RIBOSOMAL_S7"/>
    <property type="match status" value="1"/>
</dbReference>
<name>RS7_CUPMC</name>
<comment type="function">
    <text evidence="1">One of the primary rRNA binding proteins, it binds directly to 16S rRNA where it nucleates assembly of the head domain of the 30S subunit. Is located at the subunit interface close to the decoding center, probably blocks exit of the E-site tRNA.</text>
</comment>
<comment type="subunit">
    <text evidence="1">Part of the 30S ribosomal subunit. Contacts proteins S9 and S11.</text>
</comment>
<comment type="similarity">
    <text evidence="1">Belongs to the universal ribosomal protein uS7 family.</text>
</comment>